<reference key="1">
    <citation type="journal article" date="2005" name="J. Bacteriol.">
        <title>Whole-genome sequence analysis of Pseudomonas syringae pv. phaseolicola 1448A reveals divergence among pathovars in genes involved in virulence and transposition.</title>
        <authorList>
            <person name="Joardar V."/>
            <person name="Lindeberg M."/>
            <person name="Jackson R.W."/>
            <person name="Selengut J."/>
            <person name="Dodson R."/>
            <person name="Brinkac L.M."/>
            <person name="Daugherty S.C."/>
            <person name="DeBoy R.T."/>
            <person name="Durkin A.S."/>
            <person name="Gwinn Giglio M."/>
            <person name="Madupu R."/>
            <person name="Nelson W.C."/>
            <person name="Rosovitz M.J."/>
            <person name="Sullivan S.A."/>
            <person name="Crabtree J."/>
            <person name="Creasy T."/>
            <person name="Davidsen T.M."/>
            <person name="Haft D.H."/>
            <person name="Zafar N."/>
            <person name="Zhou L."/>
            <person name="Halpin R."/>
            <person name="Holley T."/>
            <person name="Khouri H.M."/>
            <person name="Feldblyum T.V."/>
            <person name="White O."/>
            <person name="Fraser C.M."/>
            <person name="Chatterjee A.K."/>
            <person name="Cartinhour S."/>
            <person name="Schneider D."/>
            <person name="Mansfield J.W."/>
            <person name="Collmer A."/>
            <person name="Buell R."/>
        </authorList>
    </citation>
    <scope>NUCLEOTIDE SEQUENCE [LARGE SCALE GENOMIC DNA]</scope>
    <source>
        <strain>1448A / Race 6</strain>
    </source>
</reference>
<evidence type="ECO:0000255" key="1">
    <source>
        <dbReference type="HAMAP-Rule" id="MF_00237"/>
    </source>
</evidence>
<evidence type="ECO:0000256" key="2">
    <source>
        <dbReference type="SAM" id="MobiDB-lite"/>
    </source>
</evidence>
<proteinExistence type="inferred from homology"/>
<accession>Q48PK0</accession>
<name>TATB_PSE14</name>
<organism>
    <name type="scientific">Pseudomonas savastanoi pv. phaseolicola (strain 1448A / Race 6)</name>
    <name type="common">Pseudomonas syringae pv. phaseolicola (strain 1448A / Race 6)</name>
    <dbReference type="NCBI Taxonomy" id="264730"/>
    <lineage>
        <taxon>Bacteria</taxon>
        <taxon>Pseudomonadati</taxon>
        <taxon>Pseudomonadota</taxon>
        <taxon>Gammaproteobacteria</taxon>
        <taxon>Pseudomonadales</taxon>
        <taxon>Pseudomonadaceae</taxon>
        <taxon>Pseudomonas</taxon>
    </lineage>
</organism>
<sequence length="153" mass="16513">MFGISFSELLLVGLVALLVLGPERLPGAARTAGLWIGRLKRSFNAIKQEVEREIGADEIRRQLHNEHIISLEDEARKMFAQNQHPETTYEPVSPQPASVQPDAANTGHNTLGPAEPAAPKPALSLEKTAKPVDADTPVPTPPVHDSSLPPRAP</sequence>
<protein>
    <recommendedName>
        <fullName evidence="1">Sec-independent protein translocase protein TatB</fullName>
    </recommendedName>
</protein>
<gene>
    <name evidence="1" type="primary">tatB</name>
    <name type="ordered locus">PSPPH_0366</name>
</gene>
<feature type="chain" id="PRO_0000301211" description="Sec-independent protein translocase protein TatB">
    <location>
        <begin position="1"/>
        <end position="153"/>
    </location>
</feature>
<feature type="transmembrane region" description="Helical" evidence="1">
    <location>
        <begin position="1"/>
        <end position="21"/>
    </location>
</feature>
<feature type="region of interest" description="Disordered" evidence="2">
    <location>
        <begin position="78"/>
        <end position="153"/>
    </location>
</feature>
<dbReference type="EMBL" id="CP000058">
    <property type="protein sequence ID" value="AAZ35470.1"/>
    <property type="molecule type" value="Genomic_DNA"/>
</dbReference>
<dbReference type="RefSeq" id="WP_002551629.1">
    <property type="nucleotide sequence ID" value="NC_005773.3"/>
</dbReference>
<dbReference type="SMR" id="Q48PK0"/>
<dbReference type="KEGG" id="psp:PSPPH_0366"/>
<dbReference type="eggNOG" id="COG1826">
    <property type="taxonomic scope" value="Bacteria"/>
</dbReference>
<dbReference type="HOGENOM" id="CLU_086034_1_1_6"/>
<dbReference type="Proteomes" id="UP000000551">
    <property type="component" value="Chromosome"/>
</dbReference>
<dbReference type="GO" id="GO:0033281">
    <property type="term" value="C:TAT protein transport complex"/>
    <property type="evidence" value="ECO:0007669"/>
    <property type="project" value="UniProtKB-UniRule"/>
</dbReference>
<dbReference type="GO" id="GO:0008320">
    <property type="term" value="F:protein transmembrane transporter activity"/>
    <property type="evidence" value="ECO:0007669"/>
    <property type="project" value="UniProtKB-UniRule"/>
</dbReference>
<dbReference type="GO" id="GO:0043953">
    <property type="term" value="P:protein transport by the Tat complex"/>
    <property type="evidence" value="ECO:0007669"/>
    <property type="project" value="UniProtKB-UniRule"/>
</dbReference>
<dbReference type="Gene3D" id="1.20.5.3310">
    <property type="match status" value="1"/>
</dbReference>
<dbReference type="HAMAP" id="MF_00237">
    <property type="entry name" value="TatB"/>
    <property type="match status" value="1"/>
</dbReference>
<dbReference type="InterPro" id="IPR003369">
    <property type="entry name" value="TatA/B/E"/>
</dbReference>
<dbReference type="InterPro" id="IPR018448">
    <property type="entry name" value="TatB"/>
</dbReference>
<dbReference type="NCBIfam" id="TIGR01410">
    <property type="entry name" value="tatB"/>
    <property type="match status" value="1"/>
</dbReference>
<dbReference type="PANTHER" id="PTHR33162">
    <property type="entry name" value="SEC-INDEPENDENT PROTEIN TRANSLOCASE PROTEIN TATA, CHLOROPLASTIC"/>
    <property type="match status" value="1"/>
</dbReference>
<dbReference type="PANTHER" id="PTHR33162:SF1">
    <property type="entry name" value="SEC-INDEPENDENT PROTEIN TRANSLOCASE PROTEIN TATA, CHLOROPLASTIC"/>
    <property type="match status" value="1"/>
</dbReference>
<dbReference type="Pfam" id="PF02416">
    <property type="entry name" value="TatA_B_E"/>
    <property type="match status" value="1"/>
</dbReference>
<dbReference type="PRINTS" id="PR01506">
    <property type="entry name" value="TATBPROTEIN"/>
</dbReference>
<comment type="function">
    <text evidence="1">Part of the twin-arginine translocation (Tat) system that transports large folded proteins containing a characteristic twin-arginine motif in their signal peptide across membranes. Together with TatC, TatB is part of a receptor directly interacting with Tat signal peptides. TatB may form an oligomeric binding site that transiently accommodates folded Tat precursor proteins before their translocation.</text>
</comment>
<comment type="subunit">
    <text evidence="1">The Tat system comprises two distinct complexes: a TatABC complex, containing multiple copies of TatA, TatB and TatC subunits, and a separate TatA complex, containing only TatA subunits. Substrates initially bind to the TatABC complex, which probably triggers association of the separate TatA complex to form the active translocon.</text>
</comment>
<comment type="subcellular location">
    <subcellularLocation>
        <location evidence="1">Cell inner membrane</location>
        <topology evidence="1">Single-pass membrane protein</topology>
    </subcellularLocation>
</comment>
<comment type="similarity">
    <text evidence="1">Belongs to the TatB family.</text>
</comment>
<keyword id="KW-0997">Cell inner membrane</keyword>
<keyword id="KW-1003">Cell membrane</keyword>
<keyword id="KW-0472">Membrane</keyword>
<keyword id="KW-0653">Protein transport</keyword>
<keyword id="KW-0811">Translocation</keyword>
<keyword id="KW-0812">Transmembrane</keyword>
<keyword id="KW-1133">Transmembrane helix</keyword>
<keyword id="KW-0813">Transport</keyword>